<comment type="function">
    <text evidence="8">Catalyzes the synthesis of alpha-glucan from sucrose. Catalyzes, in addition, sucrose hydrolysis, maltose and maltotriose synthesis by successive transfers of the glucosyl moiety of sucrose onto the released glucose, and finally turanose and trehalulose synthesis, these two sucrose isomers being obtained by glucosyl transfer onto fructose.</text>
</comment>
<comment type="catalytic activity">
    <reaction evidence="2 3">
        <text>[(1-&gt;4)-alpha-D-glucosyl](n) + sucrose = [(1-&gt;4)-alpha-D-glucosyl](n+1) + D-fructose</text>
        <dbReference type="Rhea" id="RHEA:24572"/>
        <dbReference type="Rhea" id="RHEA-COMP:9584"/>
        <dbReference type="Rhea" id="RHEA-COMP:9587"/>
        <dbReference type="ChEBI" id="CHEBI:15444"/>
        <dbReference type="ChEBI" id="CHEBI:17992"/>
        <dbReference type="ChEBI" id="CHEBI:37721"/>
        <dbReference type="EC" id="2.4.1.4"/>
    </reaction>
</comment>
<comment type="activity regulation">
    <text>Amylosucrase favors hydrolysis at low sucrose concentrations, and polymerization at high sucrose concentrations. Competitively inhibited by fructose.</text>
</comment>
<comment type="biophysicochemical properties">
    <kinetics>
        <KM evidence="2">1.9 mM for sucrose (in the sucrose consumption assay, when initial sucrose &lt; 20 mM)</KM>
        <KM evidence="2">1.7 mM for sucrose (in the sucrose hydrolysis reaction, when initial sucrose &lt; 20 mM)</KM>
        <KM evidence="2">1.9 mM for sucrose (in the polymerization reaction, when initial sucrose &lt; 20 mM)</KM>
        <KM evidence="2">50.2 mM for sucrose (in the sucrose consumption assay, when initial sucrose &gt; 20 mM)</KM>
        <KM evidence="2">38.7 mM for sucrose (in the sucrose hydrolysis reaction, when initial sucrose &gt; 20 mM)</KM>
        <Vmax evidence="2">470.0 umol/min/g enzyme for sucrose consumption (when initial sucrose &lt; 20 mM)</Vmax>
        <Vmax evidence="2">288.0 umol/min/g enzyme for sucrose hydrolysis (when initial sucrose &lt; 20 mM)</Vmax>
        <Vmax evidence="2">147.0 umol/min/g enzyme for polymerization reaction (when initial sucrose &lt; 20 mM)</Vmax>
        <Vmax evidence="2">1100.0 umol/min/g enzyme for sucrose consumption (when initial sucrose &gt; 20 mM)</Vmax>
        <Vmax evidence="2">472.0 umol/min/g enzyme for sucrose hydrolysis (when initial sucrose &gt; 20 mM)</Vmax>
        <Vmax evidence="2">1620.0 umol/min/g enzyme for polymerization reaction (when initial sucrose &gt; 20 mM)</Vmax>
        <text>This enzyme does not present a classic Michaelis-Menten behavior for sucrose consumption, that could be related to the presence of a second sucrose binding site. Nevertheless, it is possible to model sucrose consumption rate versus sucrose concentration by two different Michaelis-Menten equations whose apparent kinetic constants are given just above.</text>
    </kinetics>
</comment>
<comment type="subunit">
    <text evidence="4 5 6 8">Monomer.</text>
</comment>
<comment type="subcellular location">
    <subcellularLocation>
        <location evidence="7">Secreted</location>
    </subcellularLocation>
</comment>
<comment type="miscellaneous">
    <text>Like the recombinant protein expressed in E.coli, the amylosucrase may be secreted in N.polysaccharea without cleavage of a signal sequence.</text>
</comment>
<comment type="similarity">
    <text evidence="9">Belongs to the glycosyl hydrolase 13 family.</text>
</comment>
<comment type="sequence caution" evidence="9">
    <conflict type="frameshift" ref="1"/>
</comment>
<dbReference type="EC" id="2.4.1.4" evidence="2 3"/>
<dbReference type="EMBL" id="AJ011781">
    <property type="protein sequence ID" value="CAA09772.1"/>
    <property type="molecule type" value="Genomic_DNA"/>
</dbReference>
<dbReference type="EMBL" id="AY099335">
    <property type="protein sequence ID" value="AAM51153.1"/>
    <property type="molecule type" value="Genomic_DNA"/>
</dbReference>
<dbReference type="RefSeq" id="WP_003751803.1">
    <property type="nucleotide sequence ID" value="NZ_CAUJPE010000002.1"/>
</dbReference>
<dbReference type="PDB" id="1G5A">
    <property type="method" value="X-ray"/>
    <property type="resolution" value="1.40 A"/>
    <property type="chains" value="A=13-636"/>
</dbReference>
<dbReference type="PDB" id="1JG9">
    <property type="method" value="X-ray"/>
    <property type="resolution" value="1.66 A"/>
    <property type="chains" value="A=13-636"/>
</dbReference>
<dbReference type="PDB" id="1JGI">
    <property type="method" value="X-ray"/>
    <property type="resolution" value="2.00 A"/>
    <property type="chains" value="A=13-636"/>
</dbReference>
<dbReference type="PDB" id="1MVY">
    <property type="method" value="X-ray"/>
    <property type="resolution" value="2.00 A"/>
    <property type="chains" value="A=13-636"/>
</dbReference>
<dbReference type="PDB" id="1MW0">
    <property type="method" value="X-ray"/>
    <property type="resolution" value="2.01 A"/>
    <property type="chains" value="A=13-636"/>
</dbReference>
<dbReference type="PDB" id="1MW1">
    <property type="method" value="X-ray"/>
    <property type="resolution" value="2.10 A"/>
    <property type="chains" value="A=13-636"/>
</dbReference>
<dbReference type="PDB" id="1MW2">
    <property type="method" value="X-ray"/>
    <property type="resolution" value="2.10 A"/>
    <property type="chains" value="A=13-636"/>
</dbReference>
<dbReference type="PDB" id="1MW3">
    <property type="method" value="X-ray"/>
    <property type="resolution" value="2.00 A"/>
    <property type="chains" value="A=13-636"/>
</dbReference>
<dbReference type="PDB" id="1S46">
    <property type="method" value="X-ray"/>
    <property type="resolution" value="2.20 A"/>
    <property type="chains" value="A=13-636"/>
</dbReference>
<dbReference type="PDB" id="1ZS2">
    <property type="method" value="X-ray"/>
    <property type="resolution" value="2.16 A"/>
    <property type="chains" value="A=13-636"/>
</dbReference>
<dbReference type="PDB" id="3UEQ">
    <property type="method" value="X-ray"/>
    <property type="resolution" value="1.85 A"/>
    <property type="chains" value="A=13-636"/>
</dbReference>
<dbReference type="PDB" id="4FLO">
    <property type="method" value="X-ray"/>
    <property type="resolution" value="2.20 A"/>
    <property type="chains" value="A=13-636"/>
</dbReference>
<dbReference type="PDB" id="4FLQ">
    <property type="method" value="X-ray"/>
    <property type="resolution" value="2.50 A"/>
    <property type="chains" value="A=13-636"/>
</dbReference>
<dbReference type="PDB" id="4FLR">
    <property type="method" value="X-ray"/>
    <property type="resolution" value="2.40 A"/>
    <property type="chains" value="A=13-636"/>
</dbReference>
<dbReference type="PDB" id="4FLS">
    <property type="method" value="X-ray"/>
    <property type="resolution" value="2.30 A"/>
    <property type="chains" value="A=13-636"/>
</dbReference>
<dbReference type="PDB" id="5N6V">
    <property type="method" value="X-ray"/>
    <property type="resolution" value="1.60 A"/>
    <property type="chains" value="A=13-636"/>
</dbReference>
<dbReference type="PDB" id="5N7J">
    <property type="method" value="X-ray"/>
    <property type="resolution" value="2.00 A"/>
    <property type="chains" value="A=13-636"/>
</dbReference>
<dbReference type="PDBsum" id="1G5A"/>
<dbReference type="PDBsum" id="1JG9"/>
<dbReference type="PDBsum" id="1JGI"/>
<dbReference type="PDBsum" id="1MVY"/>
<dbReference type="PDBsum" id="1MW0"/>
<dbReference type="PDBsum" id="1MW1"/>
<dbReference type="PDBsum" id="1MW2"/>
<dbReference type="PDBsum" id="1MW3"/>
<dbReference type="PDBsum" id="1S46"/>
<dbReference type="PDBsum" id="1ZS2"/>
<dbReference type="PDBsum" id="3UEQ"/>
<dbReference type="PDBsum" id="4FLO"/>
<dbReference type="PDBsum" id="4FLQ"/>
<dbReference type="PDBsum" id="4FLR"/>
<dbReference type="PDBsum" id="4FLS"/>
<dbReference type="PDBsum" id="5N6V"/>
<dbReference type="PDBsum" id="5N7J"/>
<dbReference type="SMR" id="Q9ZEU2"/>
<dbReference type="DrugBank" id="DB04447">
    <property type="generic name" value="1,4-Dithiothreitol"/>
</dbReference>
<dbReference type="DrugBank" id="DB02379">
    <property type="generic name" value="Beta-D-Glucose"/>
</dbReference>
<dbReference type="DrugBank" id="DB02772">
    <property type="generic name" value="Sucrose"/>
</dbReference>
<dbReference type="CAZy" id="GH13">
    <property type="family name" value="Glycoside Hydrolase Family 13"/>
</dbReference>
<dbReference type="BRENDA" id="2.4.1.4">
    <property type="organism ID" value="3596"/>
</dbReference>
<dbReference type="SABIO-RK" id="Q9ZEU2"/>
<dbReference type="EvolutionaryTrace" id="Q9ZEU2"/>
<dbReference type="GO" id="GO:0005576">
    <property type="term" value="C:extracellular region"/>
    <property type="evidence" value="ECO:0007669"/>
    <property type="project" value="UniProtKB-SubCell"/>
</dbReference>
<dbReference type="GO" id="GO:0047669">
    <property type="term" value="F:amylosucrase activity"/>
    <property type="evidence" value="ECO:0007669"/>
    <property type="project" value="UniProtKB-EC"/>
</dbReference>
<dbReference type="GO" id="GO:0005975">
    <property type="term" value="P:carbohydrate metabolic process"/>
    <property type="evidence" value="ECO:0007669"/>
    <property type="project" value="InterPro"/>
</dbReference>
<dbReference type="CDD" id="cd11324">
    <property type="entry name" value="AmyAc_Amylosucrase"/>
    <property type="match status" value="1"/>
</dbReference>
<dbReference type="Gene3D" id="1.10.1740.10">
    <property type="match status" value="1"/>
</dbReference>
<dbReference type="Gene3D" id="3.20.20.80">
    <property type="entry name" value="Glycosidases"/>
    <property type="match status" value="1"/>
</dbReference>
<dbReference type="Gene3D" id="2.60.40.1180">
    <property type="entry name" value="Golgi alpha-mannosidase II"/>
    <property type="match status" value="1"/>
</dbReference>
<dbReference type="Gene3D" id="3.90.400.10">
    <property type="entry name" value="Oligo-1,6-glucosidase, Domain 2"/>
    <property type="match status" value="1"/>
</dbReference>
<dbReference type="InterPro" id="IPR044077">
    <property type="entry name" value="Amylosucrase"/>
</dbReference>
<dbReference type="InterPro" id="IPR055218">
    <property type="entry name" value="Amylosucrase_C"/>
</dbReference>
<dbReference type="InterPro" id="IPR006047">
    <property type="entry name" value="Glyco_hydro_13_cat_dom"/>
</dbReference>
<dbReference type="InterPro" id="IPR013780">
    <property type="entry name" value="Glyco_hydro_b"/>
</dbReference>
<dbReference type="InterPro" id="IPR017853">
    <property type="entry name" value="Glycoside_hydrolase_SF"/>
</dbReference>
<dbReference type="InterPro" id="IPR045857">
    <property type="entry name" value="O16G_dom_2"/>
</dbReference>
<dbReference type="PANTHER" id="PTHR10357:SF213">
    <property type="entry name" value="ALPHA AMYLASE CATALYTIC REGION"/>
    <property type="match status" value="1"/>
</dbReference>
<dbReference type="PANTHER" id="PTHR10357">
    <property type="entry name" value="ALPHA-AMYLASE FAMILY MEMBER"/>
    <property type="match status" value="1"/>
</dbReference>
<dbReference type="Pfam" id="PF00128">
    <property type="entry name" value="Alpha-amylase"/>
    <property type="match status" value="1"/>
</dbReference>
<dbReference type="Pfam" id="PF22582">
    <property type="entry name" value="Amylosucrase_C-like"/>
    <property type="match status" value="1"/>
</dbReference>
<dbReference type="SMART" id="SM00642">
    <property type="entry name" value="Aamy"/>
    <property type="match status" value="1"/>
</dbReference>
<dbReference type="SUPFAM" id="SSF51445">
    <property type="entry name" value="(Trans)glycosidases"/>
    <property type="match status" value="1"/>
</dbReference>
<dbReference type="SUPFAM" id="SSF51011">
    <property type="entry name" value="Glycosyl hydrolase domain"/>
    <property type="match status" value="1"/>
</dbReference>
<name>AMYS_NEIPO</name>
<feature type="chain" id="PRO_0000045154" description="Amylosucrase">
    <location>
        <begin position="1"/>
        <end position="636"/>
    </location>
</feature>
<feature type="active site" description="Nucleophile" evidence="6 10">
    <location>
        <position position="294"/>
    </location>
</feature>
<feature type="active site" description="Proton donor" evidence="10">
    <location>
        <position position="336"/>
    </location>
</feature>
<feature type="binding site" evidence="11 12 13">
    <location>
        <position position="152"/>
    </location>
    <ligand>
        <name>substrate</name>
    </ligand>
</feature>
<feature type="binding site" evidence="11 12 13">
    <location>
        <position position="195"/>
    </location>
    <ligand>
        <name>substrate</name>
    </ligand>
</feature>
<feature type="binding site" evidence="11 12 13">
    <location>
        <position position="262"/>
    </location>
    <ligand>
        <name>substrate</name>
    </ligand>
</feature>
<feature type="binding site" evidence="11 12 13">
    <location>
        <position position="292"/>
    </location>
    <ligand>
        <name>substrate</name>
    </ligand>
</feature>
<feature type="binding site" evidence="11 12 13">
    <location>
        <position position="400"/>
    </location>
    <ligand>
        <name>substrate</name>
    </ligand>
</feature>
<feature type="binding site" evidence="11 12 13">
    <location>
        <position position="401"/>
    </location>
    <ligand>
        <name>substrate</name>
    </ligand>
</feature>
<feature type="binding site" evidence="11 12 13">
    <location>
        <position position="517"/>
    </location>
    <ligand>
        <name>substrate</name>
    </ligand>
</feature>
<feature type="site" description="Transition state stabilizer" evidence="1">
    <location>
        <position position="452"/>
    </location>
</feature>
<feature type="mutagenesis site" description="98% reduction of activity." evidence="3">
    <original>H</original>
    <variation>Q</variation>
    <location>
        <position position="195"/>
    </location>
</feature>
<feature type="mutagenesis site" description="Complete loss of activity." evidence="3">
    <original>D</original>
    <variation>E</variation>
    <variation>N</variation>
    <location>
        <position position="294"/>
    </location>
</feature>
<feature type="mutagenesis site" description="No effect." evidence="3">
    <original>E</original>
    <variation>Q</variation>
    <location>
        <position position="308"/>
    </location>
</feature>
<feature type="mutagenesis site" description="Complete loss of activity." evidence="3">
    <original>E</original>
    <variation>Q</variation>
    <location>
        <position position="336"/>
    </location>
</feature>
<feature type="mutagenesis site" description="30% reduction of activity." evidence="3">
    <original>E</original>
    <variation>Q</variation>
    <location>
        <position position="352"/>
    </location>
</feature>
<feature type="mutagenesis site" description="97% reduction of activity." evidence="3">
    <original>H</original>
    <variation>N</variation>
    <location>
        <position position="400"/>
    </location>
</feature>
<feature type="mutagenesis site" description="Almost complete loss of activity." evidence="3">
    <original>D</original>
    <variation>E</variation>
    <location>
        <position position="401"/>
    </location>
</feature>
<feature type="sequence conflict" description="In Ref. 3; AAM51153." evidence="9" ref="3">
    <original>Y</original>
    <variation>H</variation>
    <location>
        <position position="14"/>
    </location>
</feature>
<feature type="sequence conflict" description="In Ref. 3; AAM51153." evidence="9" ref="3">
    <original>NS</original>
    <variation>SA</variation>
    <location>
        <begin position="84"/>
        <end position="85"/>
    </location>
</feature>
<feature type="sequence conflict" description="In Ref. 3; AAM51153." evidence="9" ref="3">
    <original>D</original>
    <variation>N</variation>
    <location>
        <position position="89"/>
    </location>
</feature>
<feature type="sequence conflict" description="In Ref. 3; AAM51153." evidence="9" ref="3">
    <original>A</original>
    <variation>E</variation>
    <location>
        <position position="93"/>
    </location>
</feature>
<feature type="sequence conflict" description="In Ref. 1; AA sequence." evidence="9" ref="1">
    <original>S</original>
    <variation>T</variation>
    <location>
        <position position="159"/>
    </location>
</feature>
<feature type="sequence conflict" description="In Ref. 3; AAM51153." evidence="9" ref="3">
    <original>G</original>
    <variation>D</variation>
    <location>
        <position position="171"/>
    </location>
</feature>
<feature type="sequence conflict" description="In Ref. 1; AA sequence." evidence="9" ref="1">
    <location>
        <position position="208"/>
    </location>
</feature>
<feature type="sequence conflict" description="In Ref. 3; AAM51153." evidence="9" ref="3">
    <original>A</original>
    <variation>S</variation>
    <location>
        <position position="392"/>
    </location>
</feature>
<feature type="sequence conflict" description="In Ref. 1; AA sequence." evidence="9" ref="1">
    <original>S</original>
    <variation>T</variation>
    <location>
        <position position="437"/>
    </location>
</feature>
<feature type="sequence conflict" description="In Ref. 3; AAM51153." evidence="9" ref="3">
    <original>S</original>
    <variation>N</variation>
    <location>
        <position position="449"/>
    </location>
</feature>
<feature type="sequence conflict" description="In Ref. 3; AAM51153." evidence="9" ref="3">
    <original>A</original>
    <variation>S</variation>
    <location>
        <position position="459"/>
    </location>
</feature>
<feature type="sequence conflict" description="In Ref. 3; AAM51153." evidence="9" ref="3">
    <original>V</original>
    <variation>A</variation>
    <location>
        <position position="463"/>
    </location>
</feature>
<feature type="sequence conflict" description="In Ref. 3; AAM51153." evidence="9" ref="3">
    <original>D</original>
    <variation>N</variation>
    <location>
        <position position="468"/>
    </location>
</feature>
<feature type="sequence conflict" description="In Ref. 3; AAM51153." evidence="9" ref="3">
    <original>D</original>
    <variation>S</variation>
    <location>
        <position position="474"/>
    </location>
</feature>
<feature type="sequence conflict" description="In Ref. 3; AAM51153." evidence="9" ref="3">
    <original>L</original>
    <variation>P</variation>
    <location>
        <position position="501"/>
    </location>
</feature>
<feature type="sequence conflict" description="In Ref. 3; AAM51153." evidence="9" ref="3">
    <original>DWSQDS</original>
    <variation>GWAQDG</variation>
    <location>
        <begin position="505"/>
        <end position="510"/>
    </location>
</feature>
<feature type="helix" evidence="14">
    <location>
        <begin position="12"/>
        <end position="19"/>
    </location>
</feature>
<feature type="helix" evidence="14">
    <location>
        <begin position="20"/>
        <end position="22"/>
    </location>
</feature>
<feature type="helix" evidence="14">
    <location>
        <begin position="25"/>
        <end position="33"/>
    </location>
</feature>
<feature type="helix" evidence="14">
    <location>
        <begin position="35"/>
        <end position="59"/>
    </location>
</feature>
<feature type="helix" evidence="14">
    <location>
        <begin position="65"/>
        <end position="82"/>
    </location>
</feature>
<feature type="helix" evidence="14">
    <location>
        <begin position="85"/>
        <end position="95"/>
    </location>
</feature>
<feature type="helix" evidence="14">
    <location>
        <begin position="98"/>
        <end position="102"/>
    </location>
</feature>
<feature type="strand" evidence="14">
    <location>
        <begin position="108"/>
        <end position="111"/>
    </location>
</feature>
<feature type="helix" evidence="14">
    <location>
        <begin position="113"/>
        <end position="117"/>
    </location>
</feature>
<feature type="helix" evidence="14">
    <location>
        <begin position="120"/>
        <end position="125"/>
    </location>
</feature>
<feature type="helix" evidence="14">
    <location>
        <begin position="127"/>
        <end position="133"/>
    </location>
</feature>
<feature type="strand" evidence="14">
    <location>
        <begin position="136"/>
        <end position="140"/>
    </location>
</feature>
<feature type="turn" evidence="14">
    <location>
        <begin position="152"/>
        <end position="155"/>
    </location>
</feature>
<feature type="strand" evidence="14">
    <location>
        <begin position="160"/>
        <end position="163"/>
    </location>
</feature>
<feature type="turn" evidence="14">
    <location>
        <begin position="165"/>
        <end position="167"/>
    </location>
</feature>
<feature type="helix" evidence="14">
    <location>
        <begin position="170"/>
        <end position="182"/>
    </location>
</feature>
<feature type="strand" evidence="14">
    <location>
        <begin position="186"/>
        <end position="191"/>
    </location>
</feature>
<feature type="strand" evidence="14">
    <location>
        <begin position="194"/>
        <end position="197"/>
    </location>
</feature>
<feature type="helix" evidence="14">
    <location>
        <begin position="201"/>
        <end position="207"/>
    </location>
</feature>
<feature type="helix" evidence="14">
    <location>
        <begin position="211"/>
        <end position="213"/>
    </location>
</feature>
<feature type="strand" evidence="14">
    <location>
        <begin position="219"/>
        <end position="223"/>
    </location>
</feature>
<feature type="helix" evidence="14">
    <location>
        <begin position="224"/>
        <end position="229"/>
    </location>
</feature>
<feature type="turn" evidence="14">
    <location>
        <begin position="230"/>
        <end position="232"/>
    </location>
</feature>
<feature type="turn" evidence="14">
    <location>
        <begin position="238"/>
        <end position="240"/>
    </location>
</feature>
<feature type="strand" evidence="14">
    <location>
        <begin position="245"/>
        <end position="247"/>
    </location>
</feature>
<feature type="strand" evidence="14">
    <location>
        <begin position="253"/>
        <end position="255"/>
    </location>
</feature>
<feature type="strand" evidence="14">
    <location>
        <begin position="257"/>
        <end position="259"/>
    </location>
</feature>
<feature type="strand" evidence="14">
    <location>
        <begin position="262"/>
        <end position="265"/>
    </location>
</feature>
<feature type="helix" evidence="14">
    <location>
        <begin position="270"/>
        <end position="284"/>
    </location>
</feature>
<feature type="turn" evidence="14">
    <location>
        <begin position="285"/>
        <end position="287"/>
    </location>
</feature>
<feature type="strand" evidence="14">
    <location>
        <begin position="289"/>
        <end position="293"/>
    </location>
</feature>
<feature type="helix" evidence="14">
    <location>
        <begin position="296"/>
        <end position="298"/>
    </location>
</feature>
<feature type="strand" evidence="14">
    <location>
        <begin position="307"/>
        <end position="309"/>
    </location>
</feature>
<feature type="helix" evidence="14">
    <location>
        <begin position="311"/>
        <end position="327"/>
    </location>
</feature>
<feature type="strand" evidence="14">
    <location>
        <begin position="332"/>
        <end position="335"/>
    </location>
</feature>
<feature type="helix" evidence="14">
    <location>
        <begin position="341"/>
        <end position="344"/>
    </location>
</feature>
<feature type="helix" evidence="14">
    <location>
        <begin position="345"/>
        <end position="347"/>
    </location>
</feature>
<feature type="strand" evidence="14">
    <location>
        <begin position="352"/>
        <end position="357"/>
    </location>
</feature>
<feature type="helix" evidence="14">
    <location>
        <begin position="359"/>
        <end position="371"/>
    </location>
</feature>
<feature type="helix" evidence="14">
    <location>
        <begin position="375"/>
        <end position="383"/>
    </location>
</feature>
<feature type="strand" evidence="14">
    <location>
        <begin position="392"/>
        <end position="397"/>
    </location>
</feature>
<feature type="helix" evidence="14">
    <location>
        <begin position="409"/>
        <end position="414"/>
    </location>
</feature>
<feature type="helix" evidence="14">
    <location>
        <begin position="419"/>
        <end position="430"/>
    </location>
</feature>
<feature type="strand" evidence="14">
    <location>
        <begin position="442"/>
        <end position="444"/>
    </location>
</feature>
<feature type="turn" evidence="14">
    <location>
        <begin position="448"/>
        <end position="450"/>
    </location>
</feature>
<feature type="strand" evidence="14">
    <location>
        <begin position="454"/>
        <end position="456"/>
    </location>
</feature>
<feature type="helix" evidence="14">
    <location>
        <begin position="459"/>
        <end position="463"/>
    </location>
</feature>
<feature type="helix" evidence="14">
    <location>
        <begin position="465"/>
        <end position="467"/>
    </location>
</feature>
<feature type="helix" evidence="14">
    <location>
        <begin position="472"/>
        <end position="485"/>
    </location>
</feature>
<feature type="strand" evidence="14">
    <location>
        <begin position="486"/>
        <end position="493"/>
    </location>
</feature>
<feature type="helix" evidence="14">
    <location>
        <begin position="496"/>
        <end position="498"/>
    </location>
</feature>
<feature type="helix" evidence="14">
    <location>
        <begin position="506"/>
        <end position="508"/>
    </location>
</feature>
<feature type="turn" evidence="14">
    <location>
        <begin position="510"/>
        <end position="514"/>
    </location>
</feature>
<feature type="helix" evidence="14">
    <location>
        <begin position="516"/>
        <end position="520"/>
    </location>
</feature>
<feature type="helix" evidence="14">
    <location>
        <begin position="526"/>
        <end position="529"/>
    </location>
</feature>
<feature type="turn" evidence="14">
    <location>
        <begin position="530"/>
        <end position="533"/>
    </location>
</feature>
<feature type="helix" evidence="14">
    <location>
        <begin position="538"/>
        <end position="555"/>
    </location>
</feature>
<feature type="helix" evidence="14">
    <location>
        <begin position="557"/>
        <end position="559"/>
    </location>
</feature>
<feature type="strand" evidence="15">
    <location>
        <begin position="564"/>
        <end position="566"/>
    </location>
</feature>
<feature type="strand" evidence="14">
    <location>
        <begin position="574"/>
        <end position="579"/>
    </location>
</feature>
<feature type="turn" evidence="14">
    <location>
        <begin position="580"/>
        <end position="582"/>
    </location>
</feature>
<feature type="strand" evidence="14">
    <location>
        <begin position="583"/>
        <end position="588"/>
    </location>
</feature>
<feature type="strand" evidence="14">
    <location>
        <begin position="590"/>
        <end position="592"/>
    </location>
</feature>
<feature type="strand" evidence="14">
    <location>
        <begin position="594"/>
        <end position="596"/>
    </location>
</feature>
<feature type="turn" evidence="14">
    <location>
        <begin position="598"/>
        <end position="603"/>
    </location>
</feature>
<feature type="strand" evidence="14">
    <location>
        <begin position="606"/>
        <end position="610"/>
    </location>
</feature>
<feature type="turn" evidence="14">
    <location>
        <begin position="611"/>
        <end position="613"/>
    </location>
</feature>
<feature type="strand" evidence="14">
    <location>
        <begin position="616"/>
        <end position="618"/>
    </location>
</feature>
<feature type="strand" evidence="14">
    <location>
        <begin position="623"/>
        <end position="625"/>
    </location>
</feature>
<feature type="strand" evidence="14">
    <location>
        <begin position="630"/>
        <end position="634"/>
    </location>
</feature>
<organism>
    <name type="scientific">Neisseria polysaccharea</name>
    <dbReference type="NCBI Taxonomy" id="489"/>
    <lineage>
        <taxon>Bacteria</taxon>
        <taxon>Pseudomonadati</taxon>
        <taxon>Pseudomonadota</taxon>
        <taxon>Betaproteobacteria</taxon>
        <taxon>Neisseriales</taxon>
        <taxon>Neisseriaceae</taxon>
        <taxon>Neisseria</taxon>
    </lineage>
</organism>
<protein>
    <recommendedName>
        <fullName>Amylosucrase</fullName>
        <ecNumber evidence="2 3">2.4.1.4</ecNumber>
    </recommendedName>
</protein>
<keyword id="KW-0002">3D-structure</keyword>
<keyword id="KW-0903">Direct protein sequencing</keyword>
<keyword id="KW-0328">Glycosyltransferase</keyword>
<keyword id="KW-0964">Secreted</keyword>
<keyword id="KW-0808">Transferase</keyword>
<gene>
    <name type="primary">ams</name>
</gene>
<proteinExistence type="evidence at protein level"/>
<evidence type="ECO:0000250" key="1"/>
<evidence type="ECO:0000269" key="2">
    <source>
    </source>
</evidence>
<evidence type="ECO:0000269" key="3">
    <source>
    </source>
</evidence>
<evidence type="ECO:0000269" key="4">
    <source>
    </source>
</evidence>
<evidence type="ECO:0000269" key="5">
    <source>
    </source>
</evidence>
<evidence type="ECO:0000269" key="6">
    <source>
    </source>
</evidence>
<evidence type="ECO:0000269" key="7">
    <source>
    </source>
</evidence>
<evidence type="ECO:0000269" key="8">
    <source>
    </source>
</evidence>
<evidence type="ECO:0000305" key="9"/>
<evidence type="ECO:0000305" key="10">
    <source>
    </source>
</evidence>
<evidence type="ECO:0000305" key="11">
    <source>
    </source>
</evidence>
<evidence type="ECO:0000305" key="12">
    <source>
    </source>
</evidence>
<evidence type="ECO:0000305" key="13">
    <source>
    </source>
</evidence>
<evidence type="ECO:0007829" key="14">
    <source>
        <dbReference type="PDB" id="1G5A"/>
    </source>
</evidence>
<evidence type="ECO:0007829" key="15">
    <source>
        <dbReference type="PDB" id="1JGI"/>
    </source>
</evidence>
<sequence>MLTPTQQVGLILQYLKTRILDIYTPEQRAGIEKSEDWRQFSRRMDTHFPKLMNELDSVYGNNEALLPMLEMLLAQAWQSYSQRNSSLKDIDIARENNPDWILSNKQVGGVCYVDLFAGDLKGLKDKIPYFQELGLTYLHLMPLFKCPEGKSDGGYAVSSYRDVNPALGTIGDLREVIAALHEAGISAVVDFIFNHTSNEHEWAQRCAAGDPLFDNFYYIFPDRRMPDQYDRTLREIFPDQHPGGFSQLEDGRWVWTTFNSFQWDLNYSNPWVFRAMAGEMLFLANLGVDILRMDAVAFIWKQMGTSCENLPQAHALIRAFNAVMRIAAPAVFFKSEAIVHPDQVVQYIGQDECQIGYNPLQMALLWNTLATREVNLLHQALTYRHNLPEHTAWVNYVRSHDDIGWTFADEDAAYLGISGYDHRQFLNRFFVNRFDGSFARGVPFQYNPSTGDCRVSGTAAALVGLAQDDPHAVDRIKLLYSIALSTGGLPLIYLGDEVGTLNDDDWSQDSNKSDDSRWAHRPRYNEALYAQRNDPSTAAGQIYQGLRHMIAVRQSNPRFDGGRLVTFNTNNKHIIGYIRNNALLAFGNFSEYPQTVTAHTLQAMPFKAHDLIGGKTVSLNQDLTLQPYQVMWLEIA</sequence>
<reference key="1">
    <citation type="journal article" date="1997" name="J. Bacteriol.">
        <title>Cloning and characterization of the gene for amylosucrase from Neisseria polysaccharea: production of a linear alpha-1,4-glucan.</title>
        <authorList>
            <person name="Buettcher V."/>
            <person name="Welsh T."/>
            <person name="Willmitzer L."/>
            <person name="Kossmann J."/>
        </authorList>
    </citation>
    <scope>NUCLEOTIDE SEQUENCE [GENOMIC DNA]</scope>
    <scope>PROTEIN SEQUENCE OF N-TERMINUS</scope>
    <scope>SUBCELLULAR LOCATION</scope>
    <source>
        <strain>ATCC 43768 / DSM 22809 / CCUG 18030 / CIP 100113 / NCTC 11858 / LNP N 462</strain>
    </source>
</reference>
<reference key="2">
    <citation type="journal article" date="1999" name="J. Bacteriol.">
        <title>Sequence analysis of the gene encoding amylosucrase from Neisseria polysaccharea and characterization of the recombinant enzyme.</title>
        <authorList>
            <person name="Potocki de Montalk G."/>
            <person name="Remaud-Simeon M."/>
            <person name="Willemot R.-M."/>
            <person name="Planchot V."/>
            <person name="Monsan P."/>
        </authorList>
    </citation>
    <scope>NUCLEOTIDE SEQUENCE [GENOMIC DNA]</scope>
    <scope>FUNCTION</scope>
    <scope>SUBUNIT</scope>
    <source>
        <strain>ATCC 43768 / DSM 22809 / CCUG 18030 / CIP 100113 / NCTC 11858 / LNP N 462</strain>
    </source>
</reference>
<reference key="3">
    <citation type="journal article" date="2003" name="J. Clin. Microbiol.">
        <title>Nonencapsulated Neisseria meningitidis strain produces amylopectin from sucrose: altering the concept for differentiation between N. meningitidis and N. polysaccharea.</title>
        <authorList>
            <person name="Zhu P."/>
            <person name="Tsang R.S.W."/>
            <person name="Tsai C.-M."/>
        </authorList>
    </citation>
    <scope>NUCLEOTIDE SEQUENCE [GENOMIC DNA]</scope>
    <source>
        <strain>85322</strain>
    </source>
</reference>
<reference key="4">
    <citation type="journal article" date="2000" name="FEBS Lett.">
        <title>Amylosucrase from Neisseria polysaccharea: novel catalytic properties.</title>
        <authorList>
            <person name="Potocki de Montalk G."/>
            <person name="Remaud-Simeon M."/>
            <person name="Willemot R.-M."/>
            <person name="Sarcabal P."/>
            <person name="Planchot V."/>
            <person name="Monsan P."/>
        </authorList>
    </citation>
    <scope>CHARACTERIZATION</scope>
    <scope>KINETIC PARAMETERS</scope>
    <scope>CATALYTIC ACTIVITY</scope>
    <source>
        <strain>ATCC 43768 / DSM 22809 / CCUG 18030 / CIP 100113 / NCTC 11858 / LNP N 462</strain>
    </source>
</reference>
<reference key="5">
    <citation type="journal article" date="2000" name="FEBS Lett.">
        <title>Identification of key amino acid residues in Neisseria polysaccharea amylosucrase.</title>
        <authorList>
            <person name="Sarcabal P."/>
            <person name="Remaud-Simeon M."/>
            <person name="Willemot R.-M."/>
            <person name="Potocki de Montalk G."/>
            <person name="Svensson B."/>
            <person name="Monsan P."/>
        </authorList>
    </citation>
    <scope>CATALYTIC ACTIVITY</scope>
    <scope>MUTAGENESIS OF HIS-195; ASP-294; GLU-308; GLU-336; GLU-352; HIS-400 AND ASP-401</scope>
    <scope>ACTIVE SITE</scope>
    <source>
        <strain>ATCC 43768 / DSM 22809 / CCUG 18030 / CIP 100113 / NCTC 11858 / LNP N 462</strain>
    </source>
</reference>
<reference key="6">
    <citation type="journal article" date="2001" name="Biochemistry">
        <title>Crystal structures of amylosucrase from Neisseria polysaccharea in complex with D-glucose and the active site mutant Glu328Gln in complex with the natural substrate sucrose.</title>
        <authorList>
            <person name="Mirza O."/>
            <person name="Skov L.K."/>
            <person name="Remaud-Simeon M."/>
            <person name="Potocki de Montalk G."/>
            <person name="Albenne C."/>
            <person name="Monsan P."/>
            <person name="Gajhede M."/>
        </authorList>
    </citation>
    <scope>X-RAY CRYSTALLOGRAPHY (1.66 ANGSTROMS) OF 13-636 IN COMPLEX WITH D-GLUCOSE AND SUCROSE</scope>
    <source>
        <strain>ATCC 43768 / DSM 22809 / CCUG 18030 / CIP 100113 / NCTC 11858 / LNP N 462</strain>
    </source>
</reference>
<reference key="7">
    <citation type="journal article" date="2001" name="J. Biol. Chem.">
        <title>Amylosucrase, a glucan-synthesizing enzyme from the alpha-amylase family.</title>
        <authorList>
            <person name="Skov L.K."/>
            <person name="Mirza O."/>
            <person name="Henriksen A."/>
            <person name="De Montalk G.P."/>
            <person name="Remaud-Simeon M."/>
            <person name="Sarcabal P."/>
            <person name="Willemot R.M."/>
            <person name="Monsan P."/>
            <person name="Gajhede M."/>
        </authorList>
    </citation>
    <scope>X-RAY CRYSTALLOGRAPHY (1.4 ANGSTROMS) OF 13-636</scope>
    <source>
        <strain>ATCC 43768 / DSM 22809 / CCUG 18030 / CIP 100113 / NCTC 11858 / LNP N 462</strain>
    </source>
</reference>
<reference key="8">
    <citation type="journal article" date="2002" name="J. Biol. Chem.">
        <title>Oligosaccharide and sucrose complexes of amylosucrase. Structural implications for the polymerase activity.</title>
        <authorList>
            <person name="Skov L.K."/>
            <person name="Mirza O."/>
            <person name="Sprogoe D."/>
            <person name="Dar I."/>
            <person name="Remaud-Simeon M."/>
            <person name="Albenne C."/>
            <person name="Monsan P."/>
            <person name="Gajhede M."/>
        </authorList>
    </citation>
    <scope>X-RAY CRYSTALLOGRAPHY (2.00 ANGSTROMS) OF 13-636 OF MUTANT GLN-336 IN COMPLEX WITH SUCROSE AND MALTOHEPTAOSE</scope>
</reference>
<reference key="9">
    <citation type="journal article" date="2004" name="Biochemistry">
        <title>Crystal structure of the covalent intermediate of amylosucrase from Neisseria polysaccharea.</title>
        <authorList>
            <person name="Jensen M.H."/>
            <person name="Mirza O."/>
            <person name="Albenne C."/>
            <person name="Remaud-Simeon M."/>
            <person name="Monsan P."/>
            <person name="Gajhede M."/>
            <person name="Skov L.K."/>
        </authorList>
    </citation>
    <scope>X-RAY CRYSTALLOGRAPHY (2.2 ANGSTROMS) OF 13-636 OF MUTANT GLN-336 IN COMPLEX WITH ALPHA-D-GLUCOPYRANOSYL FLUORIDE</scope>
    <scope>ACTIVE SITE</scope>
</reference>
<accession>Q9ZEU2</accession>
<accession>Q84HD5</accession>